<evidence type="ECO:0000255" key="1">
    <source>
        <dbReference type="HAMAP-Rule" id="MF_01690"/>
    </source>
</evidence>
<keyword id="KW-0028">Amino-acid biosynthesis</keyword>
<keyword id="KW-0170">Cobalt</keyword>
<keyword id="KW-0220">Diaminopimelate biosynthesis</keyword>
<keyword id="KW-0378">Hydrolase</keyword>
<keyword id="KW-0457">Lysine biosynthesis</keyword>
<keyword id="KW-0479">Metal-binding</keyword>
<keyword id="KW-0862">Zinc</keyword>
<accession>B8D8P7</accession>
<dbReference type="EC" id="3.5.1.18" evidence="1"/>
<dbReference type="EMBL" id="CP001161">
    <property type="protein sequence ID" value="ACL30469.1"/>
    <property type="molecule type" value="Genomic_DNA"/>
</dbReference>
<dbReference type="RefSeq" id="WP_009874048.1">
    <property type="nucleotide sequence ID" value="NC_011833.1"/>
</dbReference>
<dbReference type="SMR" id="B8D8P7"/>
<dbReference type="KEGG" id="bap:BUAP5A_093"/>
<dbReference type="HOGENOM" id="CLU_021802_4_0_6"/>
<dbReference type="OrthoDB" id="9809784at2"/>
<dbReference type="UniPathway" id="UPA00034">
    <property type="reaction ID" value="UER00021"/>
</dbReference>
<dbReference type="Proteomes" id="UP000006904">
    <property type="component" value="Chromosome"/>
</dbReference>
<dbReference type="GO" id="GO:0008777">
    <property type="term" value="F:acetylornithine deacetylase activity"/>
    <property type="evidence" value="ECO:0007669"/>
    <property type="project" value="TreeGrafter"/>
</dbReference>
<dbReference type="GO" id="GO:0050897">
    <property type="term" value="F:cobalt ion binding"/>
    <property type="evidence" value="ECO:0007669"/>
    <property type="project" value="UniProtKB-UniRule"/>
</dbReference>
<dbReference type="GO" id="GO:0009014">
    <property type="term" value="F:succinyl-diaminopimelate desuccinylase activity"/>
    <property type="evidence" value="ECO:0007669"/>
    <property type="project" value="UniProtKB-UniRule"/>
</dbReference>
<dbReference type="GO" id="GO:0008270">
    <property type="term" value="F:zinc ion binding"/>
    <property type="evidence" value="ECO:0007669"/>
    <property type="project" value="UniProtKB-UniRule"/>
</dbReference>
<dbReference type="GO" id="GO:0019877">
    <property type="term" value="P:diaminopimelate biosynthetic process"/>
    <property type="evidence" value="ECO:0007669"/>
    <property type="project" value="UniProtKB-UniRule"/>
</dbReference>
<dbReference type="GO" id="GO:0006526">
    <property type="term" value="P:L-arginine biosynthetic process"/>
    <property type="evidence" value="ECO:0007669"/>
    <property type="project" value="TreeGrafter"/>
</dbReference>
<dbReference type="GO" id="GO:0009089">
    <property type="term" value="P:lysine biosynthetic process via diaminopimelate"/>
    <property type="evidence" value="ECO:0007669"/>
    <property type="project" value="UniProtKB-UniRule"/>
</dbReference>
<dbReference type="CDD" id="cd03891">
    <property type="entry name" value="M20_DapE_proteobac"/>
    <property type="match status" value="1"/>
</dbReference>
<dbReference type="FunFam" id="3.40.630.10:FF:000005">
    <property type="entry name" value="Succinyl-diaminopimelate desuccinylase"/>
    <property type="match status" value="1"/>
</dbReference>
<dbReference type="Gene3D" id="3.40.630.10">
    <property type="entry name" value="Zn peptidases"/>
    <property type="match status" value="2"/>
</dbReference>
<dbReference type="HAMAP" id="MF_01690">
    <property type="entry name" value="DapE"/>
    <property type="match status" value="1"/>
</dbReference>
<dbReference type="InterPro" id="IPR001261">
    <property type="entry name" value="ArgE/DapE_CS"/>
</dbReference>
<dbReference type="InterPro" id="IPR036264">
    <property type="entry name" value="Bact_exopeptidase_dim_dom"/>
</dbReference>
<dbReference type="InterPro" id="IPR005941">
    <property type="entry name" value="DapE_proteobac"/>
</dbReference>
<dbReference type="InterPro" id="IPR002933">
    <property type="entry name" value="Peptidase_M20"/>
</dbReference>
<dbReference type="InterPro" id="IPR011650">
    <property type="entry name" value="Peptidase_M20_dimer"/>
</dbReference>
<dbReference type="InterPro" id="IPR050072">
    <property type="entry name" value="Peptidase_M20A"/>
</dbReference>
<dbReference type="NCBIfam" id="TIGR01246">
    <property type="entry name" value="dapE_proteo"/>
    <property type="match status" value="1"/>
</dbReference>
<dbReference type="NCBIfam" id="NF009557">
    <property type="entry name" value="PRK13009.1"/>
    <property type="match status" value="1"/>
</dbReference>
<dbReference type="PANTHER" id="PTHR43808">
    <property type="entry name" value="ACETYLORNITHINE DEACETYLASE"/>
    <property type="match status" value="1"/>
</dbReference>
<dbReference type="PANTHER" id="PTHR43808:SF31">
    <property type="entry name" value="N-ACETYL-L-CITRULLINE DEACETYLASE"/>
    <property type="match status" value="1"/>
</dbReference>
<dbReference type="Pfam" id="PF07687">
    <property type="entry name" value="M20_dimer"/>
    <property type="match status" value="1"/>
</dbReference>
<dbReference type="Pfam" id="PF01546">
    <property type="entry name" value="Peptidase_M20"/>
    <property type="match status" value="1"/>
</dbReference>
<dbReference type="SUPFAM" id="SSF55031">
    <property type="entry name" value="Bacterial exopeptidase dimerisation domain"/>
    <property type="match status" value="1"/>
</dbReference>
<dbReference type="SUPFAM" id="SSF53187">
    <property type="entry name" value="Zn-dependent exopeptidases"/>
    <property type="match status" value="1"/>
</dbReference>
<dbReference type="PROSITE" id="PS00759">
    <property type="entry name" value="ARGE_DAPE_CPG2_2"/>
    <property type="match status" value="1"/>
</dbReference>
<organism>
    <name type="scientific">Buchnera aphidicola subsp. Acyrthosiphon pisum (strain 5A)</name>
    <dbReference type="NCBI Taxonomy" id="563178"/>
    <lineage>
        <taxon>Bacteria</taxon>
        <taxon>Pseudomonadati</taxon>
        <taxon>Pseudomonadota</taxon>
        <taxon>Gammaproteobacteria</taxon>
        <taxon>Enterobacterales</taxon>
        <taxon>Erwiniaceae</taxon>
        <taxon>Buchnera</taxon>
    </lineage>
</organism>
<name>DAPE_BUCA5</name>
<gene>
    <name evidence="1" type="primary">dapE</name>
    <name type="ordered locus">BUAP5A_093</name>
</gene>
<reference key="1">
    <citation type="journal article" date="2009" name="Science">
        <title>The dynamics and time scale of ongoing genomic erosion in symbiotic bacteria.</title>
        <authorList>
            <person name="Moran N.A."/>
            <person name="McLaughlin H.J."/>
            <person name="Sorek R."/>
        </authorList>
    </citation>
    <scope>NUCLEOTIDE SEQUENCE [LARGE SCALE GENOMIC DNA]</scope>
    <source>
        <strain>5A</strain>
    </source>
</reference>
<proteinExistence type="inferred from homology"/>
<protein>
    <recommendedName>
        <fullName evidence="1">Succinyl-diaminopimelate desuccinylase</fullName>
        <shortName evidence="1">SDAP desuccinylase</shortName>
        <ecNumber evidence="1">3.5.1.18</ecNumber>
    </recommendedName>
    <alternativeName>
        <fullName evidence="1">N-succinyl-LL-2,6-diaminoheptanedioate amidohydrolase</fullName>
    </alternativeName>
</protein>
<comment type="function">
    <text evidence="1">Catalyzes the hydrolysis of N-succinyl-L,L-diaminopimelic acid (SDAP), forming succinate and LL-2,6-diaminopimelate (DAP), an intermediate involved in the bacterial biosynthesis of lysine and meso-diaminopimelic acid, an essential component of bacterial cell walls.</text>
</comment>
<comment type="catalytic activity">
    <reaction evidence="1">
        <text>N-succinyl-(2S,6S)-2,6-diaminopimelate + H2O = (2S,6S)-2,6-diaminopimelate + succinate</text>
        <dbReference type="Rhea" id="RHEA:22608"/>
        <dbReference type="ChEBI" id="CHEBI:15377"/>
        <dbReference type="ChEBI" id="CHEBI:30031"/>
        <dbReference type="ChEBI" id="CHEBI:57609"/>
        <dbReference type="ChEBI" id="CHEBI:58087"/>
        <dbReference type="EC" id="3.5.1.18"/>
    </reaction>
</comment>
<comment type="cofactor">
    <cofactor evidence="1">
        <name>Zn(2+)</name>
        <dbReference type="ChEBI" id="CHEBI:29105"/>
    </cofactor>
    <cofactor evidence="1">
        <name>Co(2+)</name>
        <dbReference type="ChEBI" id="CHEBI:48828"/>
    </cofactor>
    <text evidence="1">Binds 2 Zn(2+) or Co(2+) ions per subunit.</text>
</comment>
<comment type="pathway">
    <text evidence="1">Amino-acid biosynthesis; L-lysine biosynthesis via DAP pathway; LL-2,6-diaminopimelate from (S)-tetrahydrodipicolinate (succinylase route): step 3/3.</text>
</comment>
<comment type="subunit">
    <text evidence="1">Homodimer.</text>
</comment>
<comment type="similarity">
    <text evidence="1">Belongs to the peptidase M20A family. DapE subfamily.</text>
</comment>
<feature type="chain" id="PRO_0000375492" description="Succinyl-diaminopimelate desuccinylase">
    <location>
        <begin position="1"/>
        <end position="375"/>
    </location>
</feature>
<feature type="active site" evidence="1">
    <location>
        <position position="68"/>
    </location>
</feature>
<feature type="active site" description="Proton acceptor" evidence="1">
    <location>
        <position position="133"/>
    </location>
</feature>
<feature type="binding site" evidence="1">
    <location>
        <position position="66"/>
    </location>
    <ligand>
        <name>Zn(2+)</name>
        <dbReference type="ChEBI" id="CHEBI:29105"/>
        <label>1</label>
    </ligand>
</feature>
<feature type="binding site" evidence="1">
    <location>
        <position position="99"/>
    </location>
    <ligand>
        <name>Zn(2+)</name>
        <dbReference type="ChEBI" id="CHEBI:29105"/>
        <label>1</label>
    </ligand>
</feature>
<feature type="binding site" evidence="1">
    <location>
        <position position="99"/>
    </location>
    <ligand>
        <name>Zn(2+)</name>
        <dbReference type="ChEBI" id="CHEBI:29105"/>
        <label>2</label>
    </ligand>
</feature>
<feature type="binding site" evidence="1">
    <location>
        <position position="134"/>
    </location>
    <ligand>
        <name>Zn(2+)</name>
        <dbReference type="ChEBI" id="CHEBI:29105"/>
        <label>2</label>
    </ligand>
</feature>
<feature type="binding site" evidence="1">
    <location>
        <position position="162"/>
    </location>
    <ligand>
        <name>Zn(2+)</name>
        <dbReference type="ChEBI" id="CHEBI:29105"/>
        <label>1</label>
    </ligand>
</feature>
<feature type="binding site" evidence="1">
    <location>
        <position position="348"/>
    </location>
    <ligand>
        <name>Zn(2+)</name>
        <dbReference type="ChEBI" id="CHEBI:29105"/>
        <label>2</label>
    </ligand>
</feature>
<sequence>MTCSITELAKKLISIPSVSPKDLGCQDIIIKRLCAIGFDIKRVNVNDTKNFWAFRGTGKTLTFAGHTDVVPIGQDKDWQTDPFQPVIRSGYLFGRGSADMKGALAAMITAAERFVNKFPNHKGRLSFLITSDEESSAVDGTIKVVEYLMSKRDMIDYCIVGEPSSTNIVGDVIKNGRRGSITANITIHGIQGHIAYPDLADNPIHKGLPVILKILSIKLDSGNDFFLPSSINIANIHAGNGFNNVIPGSLFVQFNIRFSSEVSEKHIQSQIVNILNSNDINYSIEWLFSGKPFITKKGLLIDTVIQSIFYFNKKKPILSTSGGTSDGRFIALMGSEVVELGLVNNTIHKVNECVKISDLKLLSCMYEDIMKNLLS</sequence>